<sequence length="274" mass="29834">MAFSGHHARKRFGQHWLKDESVLQRIVAAAALQPDDHVLEVGPGRGALTAQLLASPAASVQAVELDRDLVAGLQQRFAAEPRFQLQSGDVLALPQLGDGERRPTKVVANIPYNITGPLLERLVGRLDRPVEPPYQRLVLLVQQEVARRISARAGQSSFSALSVRMQLLAHCRSVCPVPPRCFQPPPKVQSEVISLDPLPADQRPPQAVAKQVEHLLRLAFSARRKMVRNTLASAAPAVGLEVWLADAGLTPQQRPQEIAAQQWVALAAALQPAL</sequence>
<gene>
    <name evidence="1" type="primary">rsmA</name>
    <name evidence="1" type="synonym">ksgA</name>
    <name type="ordered locus">SynRCC307_1315</name>
</gene>
<protein>
    <recommendedName>
        <fullName evidence="1">Ribosomal RNA small subunit methyltransferase A</fullName>
        <ecNumber evidence="1">2.1.1.182</ecNumber>
    </recommendedName>
    <alternativeName>
        <fullName evidence="1">16S rRNA (adenine(1518)-N(6)/adenine(1519)-N(6))-dimethyltransferase</fullName>
    </alternativeName>
    <alternativeName>
        <fullName evidence="1">16S rRNA dimethyladenosine transferase</fullName>
    </alternativeName>
    <alternativeName>
        <fullName evidence="1">16S rRNA dimethylase</fullName>
    </alternativeName>
    <alternativeName>
        <fullName evidence="1">S-adenosylmethionine-6-N', N'-adenosyl(rRNA) dimethyltransferase</fullName>
    </alternativeName>
</protein>
<proteinExistence type="inferred from homology"/>
<accession>A5GTK9</accession>
<comment type="function">
    <text evidence="1">Specifically dimethylates two adjacent adenosines (A1518 and A1519) in the loop of a conserved hairpin near the 3'-end of 16S rRNA in the 30S particle. May play a critical role in biogenesis of 30S subunits.</text>
</comment>
<comment type="catalytic activity">
    <reaction evidence="1">
        <text>adenosine(1518)/adenosine(1519) in 16S rRNA + 4 S-adenosyl-L-methionine = N(6)-dimethyladenosine(1518)/N(6)-dimethyladenosine(1519) in 16S rRNA + 4 S-adenosyl-L-homocysteine + 4 H(+)</text>
        <dbReference type="Rhea" id="RHEA:19609"/>
        <dbReference type="Rhea" id="RHEA-COMP:10232"/>
        <dbReference type="Rhea" id="RHEA-COMP:10233"/>
        <dbReference type="ChEBI" id="CHEBI:15378"/>
        <dbReference type="ChEBI" id="CHEBI:57856"/>
        <dbReference type="ChEBI" id="CHEBI:59789"/>
        <dbReference type="ChEBI" id="CHEBI:74411"/>
        <dbReference type="ChEBI" id="CHEBI:74493"/>
        <dbReference type="EC" id="2.1.1.182"/>
    </reaction>
</comment>
<comment type="subcellular location">
    <subcellularLocation>
        <location evidence="1">Cytoplasm</location>
    </subcellularLocation>
</comment>
<comment type="similarity">
    <text evidence="1">Belongs to the class I-like SAM-binding methyltransferase superfamily. rRNA adenine N(6)-methyltransferase family. RsmA subfamily.</text>
</comment>
<reference key="1">
    <citation type="submission" date="2006-05" db="EMBL/GenBank/DDBJ databases">
        <authorList>
            <consortium name="Genoscope"/>
        </authorList>
    </citation>
    <scope>NUCLEOTIDE SEQUENCE [LARGE SCALE GENOMIC DNA]</scope>
    <source>
        <strain>RCC307</strain>
    </source>
</reference>
<feature type="chain" id="PRO_1000056684" description="Ribosomal RNA small subunit methyltransferase A">
    <location>
        <begin position="1"/>
        <end position="274"/>
    </location>
</feature>
<feature type="binding site" evidence="1">
    <location>
        <position position="15"/>
    </location>
    <ligand>
        <name>S-adenosyl-L-methionine</name>
        <dbReference type="ChEBI" id="CHEBI:59789"/>
    </ligand>
</feature>
<feature type="binding site" evidence="1">
    <location>
        <position position="17"/>
    </location>
    <ligand>
        <name>S-adenosyl-L-methionine</name>
        <dbReference type="ChEBI" id="CHEBI:59789"/>
    </ligand>
</feature>
<feature type="binding site" evidence="1">
    <location>
        <position position="42"/>
    </location>
    <ligand>
        <name>S-adenosyl-L-methionine</name>
        <dbReference type="ChEBI" id="CHEBI:59789"/>
    </ligand>
</feature>
<feature type="binding site" evidence="1">
    <location>
        <position position="64"/>
    </location>
    <ligand>
        <name>S-adenosyl-L-methionine</name>
        <dbReference type="ChEBI" id="CHEBI:59789"/>
    </ligand>
</feature>
<feature type="binding site" evidence="1">
    <location>
        <position position="89"/>
    </location>
    <ligand>
        <name>S-adenosyl-L-methionine</name>
        <dbReference type="ChEBI" id="CHEBI:59789"/>
    </ligand>
</feature>
<feature type="binding site" evidence="1">
    <location>
        <position position="109"/>
    </location>
    <ligand>
        <name>S-adenosyl-L-methionine</name>
        <dbReference type="ChEBI" id="CHEBI:59789"/>
    </ligand>
</feature>
<evidence type="ECO:0000255" key="1">
    <source>
        <dbReference type="HAMAP-Rule" id="MF_00607"/>
    </source>
</evidence>
<keyword id="KW-0963">Cytoplasm</keyword>
<keyword id="KW-0489">Methyltransferase</keyword>
<keyword id="KW-1185">Reference proteome</keyword>
<keyword id="KW-0694">RNA-binding</keyword>
<keyword id="KW-0698">rRNA processing</keyword>
<keyword id="KW-0949">S-adenosyl-L-methionine</keyword>
<keyword id="KW-0808">Transferase</keyword>
<dbReference type="EC" id="2.1.1.182" evidence="1"/>
<dbReference type="EMBL" id="CT978603">
    <property type="protein sequence ID" value="CAK28218.1"/>
    <property type="molecule type" value="Genomic_DNA"/>
</dbReference>
<dbReference type="SMR" id="A5GTK9"/>
<dbReference type="STRING" id="316278.SynRCC307_1315"/>
<dbReference type="KEGG" id="syr:SynRCC307_1315"/>
<dbReference type="eggNOG" id="COG0030">
    <property type="taxonomic scope" value="Bacteria"/>
</dbReference>
<dbReference type="HOGENOM" id="CLU_041220_0_1_3"/>
<dbReference type="OrthoDB" id="9814755at2"/>
<dbReference type="Proteomes" id="UP000001115">
    <property type="component" value="Chromosome"/>
</dbReference>
<dbReference type="GO" id="GO:0005829">
    <property type="term" value="C:cytosol"/>
    <property type="evidence" value="ECO:0007669"/>
    <property type="project" value="TreeGrafter"/>
</dbReference>
<dbReference type="GO" id="GO:0052908">
    <property type="term" value="F:16S rRNA (adenine(1518)-N(6)/adenine(1519)-N(6))-dimethyltransferase activity"/>
    <property type="evidence" value="ECO:0007669"/>
    <property type="project" value="UniProtKB-EC"/>
</dbReference>
<dbReference type="GO" id="GO:0003723">
    <property type="term" value="F:RNA binding"/>
    <property type="evidence" value="ECO:0007669"/>
    <property type="project" value="UniProtKB-KW"/>
</dbReference>
<dbReference type="CDD" id="cd02440">
    <property type="entry name" value="AdoMet_MTases"/>
    <property type="match status" value="1"/>
</dbReference>
<dbReference type="Gene3D" id="1.10.8.100">
    <property type="entry name" value="Ribosomal RNA adenine dimethylase-like, domain 2"/>
    <property type="match status" value="1"/>
</dbReference>
<dbReference type="Gene3D" id="3.40.50.150">
    <property type="entry name" value="Vaccinia Virus protein VP39"/>
    <property type="match status" value="1"/>
</dbReference>
<dbReference type="HAMAP" id="MF_00607">
    <property type="entry name" value="16SrRNA_methyltr_A"/>
    <property type="match status" value="1"/>
</dbReference>
<dbReference type="InterPro" id="IPR001737">
    <property type="entry name" value="KsgA/Erm"/>
</dbReference>
<dbReference type="InterPro" id="IPR023165">
    <property type="entry name" value="rRNA_Ade_diMease-like_C"/>
</dbReference>
<dbReference type="InterPro" id="IPR020596">
    <property type="entry name" value="rRNA_Ade_Mease_Trfase_CS"/>
</dbReference>
<dbReference type="InterPro" id="IPR020598">
    <property type="entry name" value="rRNA_Ade_methylase_Trfase_N"/>
</dbReference>
<dbReference type="InterPro" id="IPR011530">
    <property type="entry name" value="rRNA_adenine_dimethylase"/>
</dbReference>
<dbReference type="InterPro" id="IPR029063">
    <property type="entry name" value="SAM-dependent_MTases_sf"/>
</dbReference>
<dbReference type="NCBIfam" id="TIGR00755">
    <property type="entry name" value="ksgA"/>
    <property type="match status" value="1"/>
</dbReference>
<dbReference type="PANTHER" id="PTHR11727">
    <property type="entry name" value="DIMETHYLADENOSINE TRANSFERASE"/>
    <property type="match status" value="1"/>
</dbReference>
<dbReference type="PANTHER" id="PTHR11727:SF7">
    <property type="entry name" value="DIMETHYLADENOSINE TRANSFERASE-RELATED"/>
    <property type="match status" value="1"/>
</dbReference>
<dbReference type="Pfam" id="PF00398">
    <property type="entry name" value="RrnaAD"/>
    <property type="match status" value="1"/>
</dbReference>
<dbReference type="SMART" id="SM00650">
    <property type="entry name" value="rADc"/>
    <property type="match status" value="1"/>
</dbReference>
<dbReference type="SUPFAM" id="SSF53335">
    <property type="entry name" value="S-adenosyl-L-methionine-dependent methyltransferases"/>
    <property type="match status" value="1"/>
</dbReference>
<dbReference type="PROSITE" id="PS01131">
    <property type="entry name" value="RRNA_A_DIMETH"/>
    <property type="match status" value="1"/>
</dbReference>
<dbReference type="PROSITE" id="PS51689">
    <property type="entry name" value="SAM_RNA_A_N6_MT"/>
    <property type="match status" value="1"/>
</dbReference>
<organism>
    <name type="scientific">Synechococcus sp. (strain RCC307)</name>
    <dbReference type="NCBI Taxonomy" id="316278"/>
    <lineage>
        <taxon>Bacteria</taxon>
        <taxon>Bacillati</taxon>
        <taxon>Cyanobacteriota</taxon>
        <taxon>Cyanophyceae</taxon>
        <taxon>Synechococcales</taxon>
        <taxon>Synechococcaceae</taxon>
        <taxon>Synechococcus</taxon>
    </lineage>
</organism>
<name>RSMA_SYNR3</name>